<feature type="chain" id="PRO_0000242271" description="Phosphomethylpyrimidine synthase">
    <location>
        <begin position="1"/>
        <end position="624"/>
    </location>
</feature>
<feature type="region of interest" description="Disordered" evidence="2">
    <location>
        <begin position="40"/>
        <end position="61"/>
    </location>
</feature>
<feature type="compositionally biased region" description="Polar residues" evidence="2">
    <location>
        <begin position="45"/>
        <end position="54"/>
    </location>
</feature>
<feature type="binding site" evidence="1">
    <location>
        <position position="229"/>
    </location>
    <ligand>
        <name>substrate</name>
    </ligand>
</feature>
<feature type="binding site" evidence="1">
    <location>
        <position position="258"/>
    </location>
    <ligand>
        <name>substrate</name>
    </ligand>
</feature>
<feature type="binding site" evidence="1">
    <location>
        <position position="287"/>
    </location>
    <ligand>
        <name>substrate</name>
    </ligand>
</feature>
<feature type="binding site" evidence="1">
    <location>
        <position position="323"/>
    </location>
    <ligand>
        <name>substrate</name>
    </ligand>
</feature>
<feature type="binding site" evidence="1">
    <location>
        <begin position="343"/>
        <end position="345"/>
    </location>
    <ligand>
        <name>substrate</name>
    </ligand>
</feature>
<feature type="binding site" evidence="1">
    <location>
        <begin position="384"/>
        <end position="387"/>
    </location>
    <ligand>
        <name>substrate</name>
    </ligand>
</feature>
<feature type="binding site" evidence="1">
    <location>
        <position position="423"/>
    </location>
    <ligand>
        <name>substrate</name>
    </ligand>
</feature>
<feature type="binding site" evidence="1">
    <location>
        <position position="427"/>
    </location>
    <ligand>
        <name>Zn(2+)</name>
        <dbReference type="ChEBI" id="CHEBI:29105"/>
    </ligand>
</feature>
<feature type="binding site" evidence="1">
    <location>
        <position position="450"/>
    </location>
    <ligand>
        <name>substrate</name>
    </ligand>
</feature>
<feature type="binding site" evidence="1">
    <location>
        <position position="491"/>
    </location>
    <ligand>
        <name>Zn(2+)</name>
        <dbReference type="ChEBI" id="CHEBI:29105"/>
    </ligand>
</feature>
<feature type="binding site" evidence="1">
    <location>
        <position position="571"/>
    </location>
    <ligand>
        <name>[4Fe-4S] cluster</name>
        <dbReference type="ChEBI" id="CHEBI:49883"/>
        <note>4Fe-4S-S-AdoMet</note>
    </ligand>
</feature>
<feature type="binding site" evidence="1">
    <location>
        <position position="574"/>
    </location>
    <ligand>
        <name>[4Fe-4S] cluster</name>
        <dbReference type="ChEBI" id="CHEBI:49883"/>
        <note>4Fe-4S-S-AdoMet</note>
    </ligand>
</feature>
<feature type="binding site" evidence="1">
    <location>
        <position position="579"/>
    </location>
    <ligand>
        <name>[4Fe-4S] cluster</name>
        <dbReference type="ChEBI" id="CHEBI:49883"/>
        <note>4Fe-4S-S-AdoMet</note>
    </ligand>
</feature>
<organism>
    <name type="scientific">Methylococcus capsulatus (strain ATCC 33009 / NCIMB 11132 / Bath)</name>
    <dbReference type="NCBI Taxonomy" id="243233"/>
    <lineage>
        <taxon>Bacteria</taxon>
        <taxon>Pseudomonadati</taxon>
        <taxon>Pseudomonadota</taxon>
        <taxon>Gammaproteobacteria</taxon>
        <taxon>Methylococcales</taxon>
        <taxon>Methylococcaceae</taxon>
        <taxon>Methylococcus</taxon>
    </lineage>
</organism>
<sequence>MSAIPQEILHEAVTAKKASIQPFAASEKVYLQGSRPDLRVPMRKISQSDTPTNTGREKNPPVYVYDTSGPYTDPTVSVDLRLGLPPLREPWIEERGDTELLKGPSSSYGLQRQRDPALASLRFEHIRAPRRAKGGANVTQMHYARQGIITPEMEFVAIRENQKLEALAETYKFQHPGEAFGAAIPQVITPEFVRDEVARGRAIIPSNINHPESEPMIIGRNFLVKINCNLGNSAVSSSIEEEVEKMLWAIRWGGDTVMDLSTGKNIHETREWIIRNSPVPIGTVPIYQALEKVDGKAEELTWEIFRDTLIEQAEQGVDYFTIHAGIRLPFIPLTAKRTTGIVSRGGSIMAKWCLAHHKESFLYTHFEDICEIMKAYDVAFSLGDGLRPGSIADANDEAQFAELRTLGELTRIAWKHDVQVMIEGPGHVPMHMIKANMEEQLKHCHEAPFYTLGPLTTDIAPGYDHITSAIGAAMIGWYGTAMLCYVTPKEHLGLPNKQDVRDGIIAYKIAAHAADLAKGHPGAQARDNALSKARFEFRWQDQFNLSLDPEKALEFHDETLPQEGAKQAHFCSMCGPHFCSMKITQDVRDYAREHGLDEAQALAKGMEEKSDEFVRSGAEVYQRT</sequence>
<gene>
    <name evidence="1" type="primary">thiC</name>
    <name type="ordered locus">MCA2710</name>
</gene>
<name>THIC_METCA</name>
<dbReference type="EC" id="4.1.99.17" evidence="1"/>
<dbReference type="EMBL" id="AE017282">
    <property type="protein sequence ID" value="AAU91231.1"/>
    <property type="molecule type" value="Genomic_DNA"/>
</dbReference>
<dbReference type="RefSeq" id="WP_010961919.1">
    <property type="nucleotide sequence ID" value="NC_002977.6"/>
</dbReference>
<dbReference type="SMR" id="Q603T9"/>
<dbReference type="STRING" id="243233.MCA2710"/>
<dbReference type="GeneID" id="88224887"/>
<dbReference type="KEGG" id="mca:MCA2710"/>
<dbReference type="eggNOG" id="COG0422">
    <property type="taxonomic scope" value="Bacteria"/>
</dbReference>
<dbReference type="HOGENOM" id="CLU_013181_2_1_6"/>
<dbReference type="UniPathway" id="UPA00060"/>
<dbReference type="Proteomes" id="UP000006821">
    <property type="component" value="Chromosome"/>
</dbReference>
<dbReference type="GO" id="GO:0005829">
    <property type="term" value="C:cytosol"/>
    <property type="evidence" value="ECO:0007669"/>
    <property type="project" value="TreeGrafter"/>
</dbReference>
<dbReference type="GO" id="GO:0051539">
    <property type="term" value="F:4 iron, 4 sulfur cluster binding"/>
    <property type="evidence" value="ECO:0007669"/>
    <property type="project" value="UniProtKB-KW"/>
</dbReference>
<dbReference type="GO" id="GO:0016830">
    <property type="term" value="F:carbon-carbon lyase activity"/>
    <property type="evidence" value="ECO:0007669"/>
    <property type="project" value="InterPro"/>
</dbReference>
<dbReference type="GO" id="GO:0008270">
    <property type="term" value="F:zinc ion binding"/>
    <property type="evidence" value="ECO:0007669"/>
    <property type="project" value="UniProtKB-UniRule"/>
</dbReference>
<dbReference type="GO" id="GO:0009228">
    <property type="term" value="P:thiamine biosynthetic process"/>
    <property type="evidence" value="ECO:0007669"/>
    <property type="project" value="UniProtKB-KW"/>
</dbReference>
<dbReference type="GO" id="GO:0009229">
    <property type="term" value="P:thiamine diphosphate biosynthetic process"/>
    <property type="evidence" value="ECO:0007669"/>
    <property type="project" value="UniProtKB-UniRule"/>
</dbReference>
<dbReference type="FunFam" id="3.20.20.540:FF:000001">
    <property type="entry name" value="Phosphomethylpyrimidine synthase"/>
    <property type="match status" value="1"/>
</dbReference>
<dbReference type="Gene3D" id="6.10.250.620">
    <property type="match status" value="1"/>
</dbReference>
<dbReference type="Gene3D" id="3.20.20.540">
    <property type="entry name" value="Radical SAM ThiC family, central domain"/>
    <property type="match status" value="1"/>
</dbReference>
<dbReference type="HAMAP" id="MF_00089">
    <property type="entry name" value="ThiC"/>
    <property type="match status" value="1"/>
</dbReference>
<dbReference type="InterPro" id="IPR037509">
    <property type="entry name" value="ThiC"/>
</dbReference>
<dbReference type="InterPro" id="IPR025747">
    <property type="entry name" value="ThiC-associated_dom"/>
</dbReference>
<dbReference type="InterPro" id="IPR038521">
    <property type="entry name" value="ThiC/Bza_core_dom"/>
</dbReference>
<dbReference type="InterPro" id="IPR002817">
    <property type="entry name" value="ThiC/BzaA/B"/>
</dbReference>
<dbReference type="NCBIfam" id="NF006763">
    <property type="entry name" value="PRK09284.1"/>
    <property type="match status" value="1"/>
</dbReference>
<dbReference type="NCBIfam" id="NF009895">
    <property type="entry name" value="PRK13352.1"/>
    <property type="match status" value="1"/>
</dbReference>
<dbReference type="NCBIfam" id="TIGR00190">
    <property type="entry name" value="thiC"/>
    <property type="match status" value="1"/>
</dbReference>
<dbReference type="PANTHER" id="PTHR30557:SF1">
    <property type="entry name" value="PHOSPHOMETHYLPYRIMIDINE SYNTHASE, CHLOROPLASTIC"/>
    <property type="match status" value="1"/>
</dbReference>
<dbReference type="PANTHER" id="PTHR30557">
    <property type="entry name" value="THIAMINE BIOSYNTHESIS PROTEIN THIC"/>
    <property type="match status" value="1"/>
</dbReference>
<dbReference type="Pfam" id="PF13667">
    <property type="entry name" value="ThiC-associated"/>
    <property type="match status" value="1"/>
</dbReference>
<dbReference type="Pfam" id="PF01964">
    <property type="entry name" value="ThiC_Rad_SAM"/>
    <property type="match status" value="1"/>
</dbReference>
<dbReference type="SFLD" id="SFLDF00407">
    <property type="entry name" value="phosphomethylpyrimidine_syntha"/>
    <property type="match status" value="1"/>
</dbReference>
<dbReference type="SFLD" id="SFLDG01114">
    <property type="entry name" value="phosphomethylpyrimidine_syntha"/>
    <property type="match status" value="1"/>
</dbReference>
<dbReference type="SFLD" id="SFLDS00113">
    <property type="entry name" value="Radical_SAM_Phosphomethylpyrim"/>
    <property type="match status" value="1"/>
</dbReference>
<proteinExistence type="inferred from homology"/>
<accession>Q603T9</accession>
<evidence type="ECO:0000255" key="1">
    <source>
        <dbReference type="HAMAP-Rule" id="MF_00089"/>
    </source>
</evidence>
<evidence type="ECO:0000256" key="2">
    <source>
        <dbReference type="SAM" id="MobiDB-lite"/>
    </source>
</evidence>
<keyword id="KW-0004">4Fe-4S</keyword>
<keyword id="KW-0408">Iron</keyword>
<keyword id="KW-0411">Iron-sulfur</keyword>
<keyword id="KW-0456">Lyase</keyword>
<keyword id="KW-0479">Metal-binding</keyword>
<keyword id="KW-1185">Reference proteome</keyword>
<keyword id="KW-0949">S-adenosyl-L-methionine</keyword>
<keyword id="KW-0784">Thiamine biosynthesis</keyword>
<keyword id="KW-0862">Zinc</keyword>
<protein>
    <recommendedName>
        <fullName evidence="1">Phosphomethylpyrimidine synthase</fullName>
        <ecNumber evidence="1">4.1.99.17</ecNumber>
    </recommendedName>
    <alternativeName>
        <fullName evidence="1">Hydroxymethylpyrimidine phosphate synthase</fullName>
        <shortName evidence="1">HMP-P synthase</shortName>
        <shortName evidence="1">HMP-phosphate synthase</shortName>
        <shortName evidence="1">HMPP synthase</shortName>
    </alternativeName>
    <alternativeName>
        <fullName evidence="1">Thiamine biosynthesis protein ThiC</fullName>
    </alternativeName>
</protein>
<reference key="1">
    <citation type="journal article" date="2004" name="PLoS Biol.">
        <title>Genomic insights into methanotrophy: the complete genome sequence of Methylococcus capsulatus (Bath).</title>
        <authorList>
            <person name="Ward N.L."/>
            <person name="Larsen O."/>
            <person name="Sakwa J."/>
            <person name="Bruseth L."/>
            <person name="Khouri H.M."/>
            <person name="Durkin A.S."/>
            <person name="Dimitrov G."/>
            <person name="Jiang L."/>
            <person name="Scanlan D."/>
            <person name="Kang K.H."/>
            <person name="Lewis M.R."/>
            <person name="Nelson K.E."/>
            <person name="Methe B.A."/>
            <person name="Wu M."/>
            <person name="Heidelberg J.F."/>
            <person name="Paulsen I.T."/>
            <person name="Fouts D.E."/>
            <person name="Ravel J."/>
            <person name="Tettelin H."/>
            <person name="Ren Q."/>
            <person name="Read T.D."/>
            <person name="DeBoy R.T."/>
            <person name="Seshadri R."/>
            <person name="Salzberg S.L."/>
            <person name="Jensen H.B."/>
            <person name="Birkeland N.K."/>
            <person name="Nelson W.C."/>
            <person name="Dodson R.J."/>
            <person name="Grindhaug S.H."/>
            <person name="Holt I.E."/>
            <person name="Eidhammer I."/>
            <person name="Jonasen I."/>
            <person name="Vanaken S."/>
            <person name="Utterback T.R."/>
            <person name="Feldblyum T.V."/>
            <person name="Fraser C.M."/>
            <person name="Lillehaug J.R."/>
            <person name="Eisen J.A."/>
        </authorList>
    </citation>
    <scope>NUCLEOTIDE SEQUENCE [LARGE SCALE GENOMIC DNA]</scope>
    <source>
        <strain>ATCC 33009 / NCIMB 11132 / Bath</strain>
    </source>
</reference>
<comment type="function">
    <text evidence="1">Catalyzes the synthesis of the hydroxymethylpyrimidine phosphate (HMP-P) moiety of thiamine from aminoimidazole ribotide (AIR) in a radical S-adenosyl-L-methionine (SAM)-dependent reaction.</text>
</comment>
<comment type="catalytic activity">
    <reaction evidence="1">
        <text>5-amino-1-(5-phospho-beta-D-ribosyl)imidazole + S-adenosyl-L-methionine = 4-amino-2-methyl-5-(phosphooxymethyl)pyrimidine + CO + 5'-deoxyadenosine + formate + L-methionine + 3 H(+)</text>
        <dbReference type="Rhea" id="RHEA:24840"/>
        <dbReference type="ChEBI" id="CHEBI:15378"/>
        <dbReference type="ChEBI" id="CHEBI:15740"/>
        <dbReference type="ChEBI" id="CHEBI:17245"/>
        <dbReference type="ChEBI" id="CHEBI:17319"/>
        <dbReference type="ChEBI" id="CHEBI:57844"/>
        <dbReference type="ChEBI" id="CHEBI:58354"/>
        <dbReference type="ChEBI" id="CHEBI:59789"/>
        <dbReference type="ChEBI" id="CHEBI:137981"/>
        <dbReference type="EC" id="4.1.99.17"/>
    </reaction>
</comment>
<comment type="cofactor">
    <cofactor evidence="1">
        <name>[4Fe-4S] cluster</name>
        <dbReference type="ChEBI" id="CHEBI:49883"/>
    </cofactor>
    <text evidence="1">Binds 1 [4Fe-4S] cluster per subunit. The cluster is coordinated with 3 cysteines and an exchangeable S-adenosyl-L-methionine.</text>
</comment>
<comment type="pathway">
    <text evidence="1">Cofactor biosynthesis; thiamine diphosphate biosynthesis.</text>
</comment>
<comment type="subunit">
    <text evidence="1">Homodimer.</text>
</comment>
<comment type="similarity">
    <text evidence="1">Belongs to the ThiC family.</text>
</comment>